<gene>
    <name type="primary">sgcC</name>
    <name type="synonym">yjhN</name>
    <name type="ordered locus">b4304</name>
    <name type="ordered locus">JW4266</name>
</gene>
<evidence type="ECO:0000250" key="1"/>
<evidence type="ECO:0000255" key="2">
    <source>
        <dbReference type="PROSITE-ProRule" id="PRU00427"/>
    </source>
</evidence>
<evidence type="ECO:0000269" key="3">
    <source>
    </source>
</evidence>
<protein>
    <recommendedName>
        <fullName>Putative permease IIC component</fullName>
    </recommendedName>
    <alternativeName>
        <fullName>Putative PTS system EIIC component</fullName>
    </alternativeName>
</protein>
<organism>
    <name type="scientific">Escherichia coli (strain K12)</name>
    <dbReference type="NCBI Taxonomy" id="83333"/>
    <lineage>
        <taxon>Bacteria</taxon>
        <taxon>Pseudomonadati</taxon>
        <taxon>Pseudomonadota</taxon>
        <taxon>Gammaproteobacteria</taxon>
        <taxon>Enterobacterales</taxon>
        <taxon>Enterobacteriaceae</taxon>
        <taxon>Escherichia</taxon>
    </lineage>
</organism>
<dbReference type="EMBL" id="U14003">
    <property type="protein sequence ID" value="AAA97200.1"/>
    <property type="molecule type" value="Genomic_DNA"/>
</dbReference>
<dbReference type="EMBL" id="U00096">
    <property type="protein sequence ID" value="AAC77260.1"/>
    <property type="molecule type" value="Genomic_DNA"/>
</dbReference>
<dbReference type="EMBL" id="AP009048">
    <property type="protein sequence ID" value="BAE78295.1"/>
    <property type="molecule type" value="Genomic_DNA"/>
</dbReference>
<dbReference type="PIR" id="S56529">
    <property type="entry name" value="S56529"/>
</dbReference>
<dbReference type="RefSeq" id="NP_418724.1">
    <property type="nucleotide sequence ID" value="NC_000913.3"/>
</dbReference>
<dbReference type="RefSeq" id="WP_000460843.1">
    <property type="nucleotide sequence ID" value="NZ_SSUV01000012.1"/>
</dbReference>
<dbReference type="BioGRID" id="4262751">
    <property type="interactions" value="8"/>
</dbReference>
<dbReference type="ComplexPortal" id="CPX-5990">
    <property type="entry name" value="sgcABC sugar permease enzyme II complex"/>
</dbReference>
<dbReference type="FunCoup" id="P39365">
    <property type="interactions" value="122"/>
</dbReference>
<dbReference type="STRING" id="511145.b4304"/>
<dbReference type="TCDB" id="4.A.5.1.3">
    <property type="family name" value="the pts galactitol (gat) family"/>
</dbReference>
<dbReference type="PaxDb" id="511145-b4304"/>
<dbReference type="EnsemblBacteria" id="AAC77260">
    <property type="protein sequence ID" value="AAC77260"/>
    <property type="gene ID" value="b4304"/>
</dbReference>
<dbReference type="GeneID" id="946849"/>
<dbReference type="KEGG" id="ecj:JW4266"/>
<dbReference type="KEGG" id="eco:b4304"/>
<dbReference type="KEGG" id="ecoc:C3026_23220"/>
<dbReference type="PATRIC" id="fig|1411691.4.peg.2393"/>
<dbReference type="EchoBASE" id="EB2444"/>
<dbReference type="eggNOG" id="COG3775">
    <property type="taxonomic scope" value="Bacteria"/>
</dbReference>
<dbReference type="HOGENOM" id="CLU_040393_0_0_6"/>
<dbReference type="InParanoid" id="P39365"/>
<dbReference type="OMA" id="FNLMARP"/>
<dbReference type="OrthoDB" id="9787936at2"/>
<dbReference type="PhylomeDB" id="P39365"/>
<dbReference type="BioCyc" id="EcoCyc:SGCC-MONOMER"/>
<dbReference type="BioCyc" id="MetaCyc:SGCC-MONOMER"/>
<dbReference type="PRO" id="PR:P39365"/>
<dbReference type="Proteomes" id="UP000000625">
    <property type="component" value="Chromosome"/>
</dbReference>
<dbReference type="GO" id="GO:0005886">
    <property type="term" value="C:plasma membrane"/>
    <property type="evidence" value="ECO:0000314"/>
    <property type="project" value="EcoCyc"/>
</dbReference>
<dbReference type="GO" id="GO:1902495">
    <property type="term" value="C:transmembrane transporter complex"/>
    <property type="evidence" value="ECO:0000303"/>
    <property type="project" value="ComplexPortal"/>
</dbReference>
<dbReference type="GO" id="GO:0015577">
    <property type="term" value="F:galactitol transmembrane transporter activity"/>
    <property type="evidence" value="ECO:0007669"/>
    <property type="project" value="InterPro"/>
</dbReference>
<dbReference type="GO" id="GO:0008643">
    <property type="term" value="P:carbohydrate transport"/>
    <property type="evidence" value="ECO:0000303"/>
    <property type="project" value="ComplexPortal"/>
</dbReference>
<dbReference type="GO" id="GO:0009401">
    <property type="term" value="P:phosphoenolpyruvate-dependent sugar phosphotransferase system"/>
    <property type="evidence" value="ECO:0000303"/>
    <property type="project" value="ComplexPortal"/>
</dbReference>
<dbReference type="GO" id="GO:0015795">
    <property type="term" value="P:sorbitol transmembrane transport"/>
    <property type="evidence" value="ECO:0000303"/>
    <property type="project" value="ComplexPortal"/>
</dbReference>
<dbReference type="InterPro" id="IPR013853">
    <property type="entry name" value="EIIC-GAT"/>
</dbReference>
<dbReference type="InterPro" id="IPR013014">
    <property type="entry name" value="PTS_EIIC_2"/>
</dbReference>
<dbReference type="InterPro" id="IPR004703">
    <property type="entry name" value="PTS_sugar-sp_permease"/>
</dbReference>
<dbReference type="NCBIfam" id="TIGR00827">
    <property type="entry name" value="EIIC-GAT"/>
    <property type="match status" value="1"/>
</dbReference>
<dbReference type="PANTHER" id="PTHR37324:SF4">
    <property type="entry name" value="PERMEASE IIC COMPONENT-RELATED"/>
    <property type="match status" value="1"/>
</dbReference>
<dbReference type="PANTHER" id="PTHR37324">
    <property type="entry name" value="PTS SYSTEM GALACTITOL-SPECIFIC EIIC COMPONENT"/>
    <property type="match status" value="1"/>
</dbReference>
<dbReference type="Pfam" id="PF03611">
    <property type="entry name" value="EIIC-GAT"/>
    <property type="match status" value="1"/>
</dbReference>
<dbReference type="PIRSF" id="PIRSF006304">
    <property type="entry name" value="GatC"/>
    <property type="match status" value="1"/>
</dbReference>
<dbReference type="PROSITE" id="PS51104">
    <property type="entry name" value="PTS_EIIC_TYPE_2"/>
    <property type="match status" value="1"/>
</dbReference>
<reference key="1">
    <citation type="journal article" date="1995" name="Nucleic Acids Res.">
        <title>Analysis of the Escherichia coli genome VI: DNA sequence of the region from 92.8 through 100 minutes.</title>
        <authorList>
            <person name="Burland V.D."/>
            <person name="Plunkett G. III"/>
            <person name="Sofia H.J."/>
            <person name="Daniels D.L."/>
            <person name="Blattner F.R."/>
        </authorList>
    </citation>
    <scope>NUCLEOTIDE SEQUENCE [LARGE SCALE GENOMIC DNA]</scope>
    <source>
        <strain>K12 / MG1655 / ATCC 47076</strain>
    </source>
</reference>
<reference key="2">
    <citation type="journal article" date="1997" name="Science">
        <title>The complete genome sequence of Escherichia coli K-12.</title>
        <authorList>
            <person name="Blattner F.R."/>
            <person name="Plunkett G. III"/>
            <person name="Bloch C.A."/>
            <person name="Perna N.T."/>
            <person name="Burland V."/>
            <person name="Riley M."/>
            <person name="Collado-Vides J."/>
            <person name="Glasner J.D."/>
            <person name="Rode C.K."/>
            <person name="Mayhew G.F."/>
            <person name="Gregor J."/>
            <person name="Davis N.W."/>
            <person name="Kirkpatrick H.A."/>
            <person name="Goeden M.A."/>
            <person name="Rose D.J."/>
            <person name="Mau B."/>
            <person name="Shao Y."/>
        </authorList>
    </citation>
    <scope>NUCLEOTIDE SEQUENCE [LARGE SCALE GENOMIC DNA]</scope>
    <source>
        <strain>K12 / MG1655 / ATCC 47076</strain>
    </source>
</reference>
<reference key="3">
    <citation type="journal article" date="2006" name="Mol. Syst. Biol.">
        <title>Highly accurate genome sequences of Escherichia coli K-12 strains MG1655 and W3110.</title>
        <authorList>
            <person name="Hayashi K."/>
            <person name="Morooka N."/>
            <person name="Yamamoto Y."/>
            <person name="Fujita K."/>
            <person name="Isono K."/>
            <person name="Choi S."/>
            <person name="Ohtsubo E."/>
            <person name="Baba T."/>
            <person name="Wanner B.L."/>
            <person name="Mori H."/>
            <person name="Horiuchi T."/>
        </authorList>
    </citation>
    <scope>NUCLEOTIDE SEQUENCE [LARGE SCALE GENOMIC DNA]</scope>
    <source>
        <strain>K12 / W3110 / ATCC 27325 / DSM 5911</strain>
    </source>
</reference>
<reference key="4">
    <citation type="journal article" date="1996" name="Genome Sci. Technol.">
        <title>Novel phosphotransferases system genes revealed by bacterial genome analysis: operons encoding homologues of sugar-specific permease domains of the phosphotransferase system and pentose catabolic enzymes.</title>
        <authorList>
            <person name="Reizer J."/>
            <person name="Charbit A."/>
            <person name="Reizer A."/>
            <person name="Saier M.H. Jr."/>
        </authorList>
    </citation>
    <scope>DISCUSSION OF SEQUENCE</scope>
</reference>
<reference key="5">
    <citation type="journal article" date="2005" name="Science">
        <title>Global topology analysis of the Escherichia coli inner membrane proteome.</title>
        <authorList>
            <person name="Daley D.O."/>
            <person name="Rapp M."/>
            <person name="Granseth E."/>
            <person name="Melen K."/>
            <person name="Drew D."/>
            <person name="von Heijne G."/>
        </authorList>
    </citation>
    <scope>SUBCELLULAR LOCATION</scope>
    <source>
        <strain>K12 / MG1655 / ATCC 47076</strain>
    </source>
</reference>
<sequence length="437" mass="46684">MFDYILSLGGTVFVPIIMIVIGLIFRIPWLQAIKAGVTVGIGFVGMGLVIVMAIDSLSPPIKVMIERFGLALHVFDVGAGPASGVGYATAIGAMIIPVIFLLNVAMLVTRLTKTMNVDIYNYWHYAITGTVVQLMTGSLIYGVLGAICHAALSLKMADWTAKRVQNIVGLEGISIPQGYGSSSVPLFVLLDAIYEKIPFMKGRNIDAQEIQKRYGMVGDPVIIGVVLGLIFGLAAGEGFKGCASLMITVAAIMVLFPRMIRLIVEGLLPISDGARKFFQKYFKGREVYIGLDTAVTLGHPTTIAVGLLLIPIMLILASILPGNKVLPLADLPVAPFFICMATVIHRGDLVRTLISGVIVMITVLLIATQFAPYFTEMALKGGFSFAGESAQISALSVGNMFGWSISELMSLGIIGVVVAVGIVASVVLFLRKRELSE</sequence>
<feature type="chain" id="PRO_0000186691" description="Putative permease IIC component">
    <location>
        <begin position="1"/>
        <end position="437"/>
    </location>
</feature>
<feature type="transmembrane region" description="Helical" evidence="2">
    <location>
        <begin position="5"/>
        <end position="25"/>
    </location>
</feature>
<feature type="transmembrane region" description="Helical" evidence="2">
    <location>
        <begin position="35"/>
        <end position="55"/>
    </location>
</feature>
<feature type="transmembrane region" description="Helical" evidence="2">
    <location>
        <begin position="88"/>
        <end position="108"/>
    </location>
</feature>
<feature type="transmembrane region" description="Helical" evidence="2">
    <location>
        <begin position="134"/>
        <end position="154"/>
    </location>
</feature>
<feature type="transmembrane region" description="Helical" evidence="2">
    <location>
        <begin position="173"/>
        <end position="193"/>
    </location>
</feature>
<feature type="transmembrane region" description="Helical" evidence="2">
    <location>
        <begin position="215"/>
        <end position="235"/>
    </location>
</feature>
<feature type="transmembrane region" description="Helical" evidence="2">
    <location>
        <begin position="236"/>
        <end position="256"/>
    </location>
</feature>
<feature type="transmembrane region" description="Helical" evidence="2">
    <location>
        <begin position="302"/>
        <end position="322"/>
    </location>
</feature>
<feature type="transmembrane region" description="Helical" evidence="2">
    <location>
        <begin position="325"/>
        <end position="345"/>
    </location>
</feature>
<feature type="transmembrane region" description="Helical" evidence="2">
    <location>
        <begin position="354"/>
        <end position="374"/>
    </location>
</feature>
<feature type="transmembrane region" description="Helical" evidence="2">
    <location>
        <begin position="385"/>
        <end position="405"/>
    </location>
</feature>
<feature type="transmembrane region" description="Helical" evidence="2">
    <location>
        <begin position="410"/>
        <end position="430"/>
    </location>
</feature>
<feature type="domain" description="PTS EIIC type-2" evidence="2">
    <location>
        <begin position="2"/>
        <end position="437"/>
    </location>
</feature>
<name>SGCC_ECOLI</name>
<keyword id="KW-0997">Cell inner membrane</keyword>
<keyword id="KW-1003">Cell membrane</keyword>
<keyword id="KW-0472">Membrane</keyword>
<keyword id="KW-0598">Phosphotransferase system</keyword>
<keyword id="KW-1185">Reference proteome</keyword>
<keyword id="KW-0762">Sugar transport</keyword>
<keyword id="KW-0812">Transmembrane</keyword>
<keyword id="KW-1133">Transmembrane helix</keyword>
<keyword id="KW-0813">Transport</keyword>
<proteinExistence type="inferred from homology"/>
<comment type="function">
    <text evidence="1">The phosphoenolpyruvate-dependent sugar phosphotransferase system (PTS), a major carbohydrate active -transport system, catalyzes the phosphorylation of incoming sugar substrates concomitant with their translocation across the cell membrane.</text>
</comment>
<comment type="subcellular location">
    <subcellularLocation>
        <location evidence="2 3">Cell inner membrane</location>
        <topology evidence="2 3">Multi-pass membrane protein</topology>
    </subcellularLocation>
</comment>
<comment type="domain">
    <text>The EIIC domain forms the PTS system translocation channel and contains the specific substrate-binding site.</text>
</comment>
<accession>P39365</accession>
<accession>Q2M611</accession>